<gene>
    <name evidence="1" type="primary">guaA</name>
    <name type="ordered locus">lpl1686</name>
</gene>
<keyword id="KW-0067">ATP-binding</keyword>
<keyword id="KW-0315">Glutamine amidotransferase</keyword>
<keyword id="KW-0332">GMP biosynthesis</keyword>
<keyword id="KW-0436">Ligase</keyword>
<keyword id="KW-0547">Nucleotide-binding</keyword>
<keyword id="KW-0658">Purine biosynthesis</keyword>
<accession>Q5WVX4</accession>
<organism>
    <name type="scientific">Legionella pneumophila (strain Lens)</name>
    <dbReference type="NCBI Taxonomy" id="297245"/>
    <lineage>
        <taxon>Bacteria</taxon>
        <taxon>Pseudomonadati</taxon>
        <taxon>Pseudomonadota</taxon>
        <taxon>Gammaproteobacteria</taxon>
        <taxon>Legionellales</taxon>
        <taxon>Legionellaceae</taxon>
        <taxon>Legionella</taxon>
    </lineage>
</organism>
<dbReference type="EC" id="6.3.5.2" evidence="1"/>
<dbReference type="EMBL" id="CR628337">
    <property type="protein sequence ID" value="CAH15926.1"/>
    <property type="molecule type" value="Genomic_DNA"/>
</dbReference>
<dbReference type="RefSeq" id="WP_011215704.1">
    <property type="nucleotide sequence ID" value="NC_006369.1"/>
</dbReference>
<dbReference type="SMR" id="Q5WVX4"/>
<dbReference type="MEROPS" id="C26.957"/>
<dbReference type="KEGG" id="lpf:lpl1686"/>
<dbReference type="LegioList" id="lpl1686"/>
<dbReference type="HOGENOM" id="CLU_014340_0_5_6"/>
<dbReference type="UniPathway" id="UPA00189">
    <property type="reaction ID" value="UER00296"/>
</dbReference>
<dbReference type="Proteomes" id="UP000002517">
    <property type="component" value="Chromosome"/>
</dbReference>
<dbReference type="GO" id="GO:0005829">
    <property type="term" value="C:cytosol"/>
    <property type="evidence" value="ECO:0007669"/>
    <property type="project" value="TreeGrafter"/>
</dbReference>
<dbReference type="GO" id="GO:0005524">
    <property type="term" value="F:ATP binding"/>
    <property type="evidence" value="ECO:0007669"/>
    <property type="project" value="UniProtKB-UniRule"/>
</dbReference>
<dbReference type="GO" id="GO:0003921">
    <property type="term" value="F:GMP synthase activity"/>
    <property type="evidence" value="ECO:0007669"/>
    <property type="project" value="InterPro"/>
</dbReference>
<dbReference type="CDD" id="cd01742">
    <property type="entry name" value="GATase1_GMP_Synthase"/>
    <property type="match status" value="1"/>
</dbReference>
<dbReference type="CDD" id="cd01997">
    <property type="entry name" value="GMP_synthase_C"/>
    <property type="match status" value="1"/>
</dbReference>
<dbReference type="FunFam" id="3.30.300.10:FF:000002">
    <property type="entry name" value="GMP synthase [glutamine-hydrolyzing]"/>
    <property type="match status" value="1"/>
</dbReference>
<dbReference type="FunFam" id="3.40.50.620:FF:000001">
    <property type="entry name" value="GMP synthase [glutamine-hydrolyzing]"/>
    <property type="match status" value="1"/>
</dbReference>
<dbReference type="FunFam" id="3.40.50.880:FF:000001">
    <property type="entry name" value="GMP synthase [glutamine-hydrolyzing]"/>
    <property type="match status" value="1"/>
</dbReference>
<dbReference type="Gene3D" id="3.30.300.10">
    <property type="match status" value="1"/>
</dbReference>
<dbReference type="Gene3D" id="3.40.50.880">
    <property type="match status" value="1"/>
</dbReference>
<dbReference type="Gene3D" id="3.40.50.620">
    <property type="entry name" value="HUPs"/>
    <property type="match status" value="1"/>
</dbReference>
<dbReference type="HAMAP" id="MF_00344">
    <property type="entry name" value="GMP_synthase"/>
    <property type="match status" value="1"/>
</dbReference>
<dbReference type="InterPro" id="IPR029062">
    <property type="entry name" value="Class_I_gatase-like"/>
</dbReference>
<dbReference type="InterPro" id="IPR017926">
    <property type="entry name" value="GATASE"/>
</dbReference>
<dbReference type="InterPro" id="IPR001674">
    <property type="entry name" value="GMP_synth_C"/>
</dbReference>
<dbReference type="InterPro" id="IPR004739">
    <property type="entry name" value="GMP_synth_GATase"/>
</dbReference>
<dbReference type="InterPro" id="IPR022955">
    <property type="entry name" value="GMP_synthase"/>
</dbReference>
<dbReference type="InterPro" id="IPR025777">
    <property type="entry name" value="GMPS_ATP_PPase_dom"/>
</dbReference>
<dbReference type="InterPro" id="IPR022310">
    <property type="entry name" value="NAD/GMP_synthase"/>
</dbReference>
<dbReference type="InterPro" id="IPR014729">
    <property type="entry name" value="Rossmann-like_a/b/a_fold"/>
</dbReference>
<dbReference type="NCBIfam" id="TIGR00884">
    <property type="entry name" value="guaA_Cterm"/>
    <property type="match status" value="1"/>
</dbReference>
<dbReference type="NCBIfam" id="TIGR00888">
    <property type="entry name" value="guaA_Nterm"/>
    <property type="match status" value="1"/>
</dbReference>
<dbReference type="NCBIfam" id="NF000848">
    <property type="entry name" value="PRK00074.1"/>
    <property type="match status" value="1"/>
</dbReference>
<dbReference type="PANTHER" id="PTHR11922:SF2">
    <property type="entry name" value="GMP SYNTHASE [GLUTAMINE-HYDROLYZING]"/>
    <property type="match status" value="1"/>
</dbReference>
<dbReference type="PANTHER" id="PTHR11922">
    <property type="entry name" value="GMP SYNTHASE-RELATED"/>
    <property type="match status" value="1"/>
</dbReference>
<dbReference type="Pfam" id="PF00117">
    <property type="entry name" value="GATase"/>
    <property type="match status" value="1"/>
</dbReference>
<dbReference type="Pfam" id="PF00958">
    <property type="entry name" value="GMP_synt_C"/>
    <property type="match status" value="1"/>
</dbReference>
<dbReference type="Pfam" id="PF02540">
    <property type="entry name" value="NAD_synthase"/>
    <property type="match status" value="1"/>
</dbReference>
<dbReference type="PRINTS" id="PR00097">
    <property type="entry name" value="ANTSNTHASEII"/>
</dbReference>
<dbReference type="PRINTS" id="PR00099">
    <property type="entry name" value="CPSGATASE"/>
</dbReference>
<dbReference type="PRINTS" id="PR00096">
    <property type="entry name" value="GATASE"/>
</dbReference>
<dbReference type="SUPFAM" id="SSF52402">
    <property type="entry name" value="Adenine nucleotide alpha hydrolases-like"/>
    <property type="match status" value="1"/>
</dbReference>
<dbReference type="SUPFAM" id="SSF52317">
    <property type="entry name" value="Class I glutamine amidotransferase-like"/>
    <property type="match status" value="1"/>
</dbReference>
<dbReference type="SUPFAM" id="SSF54810">
    <property type="entry name" value="GMP synthetase C-terminal dimerisation domain"/>
    <property type="match status" value="1"/>
</dbReference>
<dbReference type="PROSITE" id="PS51273">
    <property type="entry name" value="GATASE_TYPE_1"/>
    <property type="match status" value="1"/>
</dbReference>
<dbReference type="PROSITE" id="PS51553">
    <property type="entry name" value="GMPS_ATP_PPASE"/>
    <property type="match status" value="1"/>
</dbReference>
<proteinExistence type="inferred from homology"/>
<comment type="function">
    <text evidence="1">Catalyzes the synthesis of GMP from XMP.</text>
</comment>
<comment type="catalytic activity">
    <reaction evidence="1">
        <text>XMP + L-glutamine + ATP + H2O = GMP + L-glutamate + AMP + diphosphate + 2 H(+)</text>
        <dbReference type="Rhea" id="RHEA:11680"/>
        <dbReference type="ChEBI" id="CHEBI:15377"/>
        <dbReference type="ChEBI" id="CHEBI:15378"/>
        <dbReference type="ChEBI" id="CHEBI:29985"/>
        <dbReference type="ChEBI" id="CHEBI:30616"/>
        <dbReference type="ChEBI" id="CHEBI:33019"/>
        <dbReference type="ChEBI" id="CHEBI:57464"/>
        <dbReference type="ChEBI" id="CHEBI:58115"/>
        <dbReference type="ChEBI" id="CHEBI:58359"/>
        <dbReference type="ChEBI" id="CHEBI:456215"/>
        <dbReference type="EC" id="6.3.5.2"/>
    </reaction>
</comment>
<comment type="pathway">
    <text evidence="1">Purine metabolism; GMP biosynthesis; GMP from XMP (L-Gln route): step 1/1.</text>
</comment>
<comment type="subunit">
    <text evidence="1">Homodimer.</text>
</comment>
<name>GUAA_LEGPL</name>
<sequence length="525" mass="58676">MNDLKKSPLLILDFGSQYTQLIARRVREMGVYCEIYPYNINHEQFKKLNPCGVILSGGPSTVTHDANPRAPQWLFESDLPLLGICYGMQTMAVQLGGQVHSSTLREFGYAELRLHGHSQLLSNIEDRTAMDGSALLDVWMSHGDKVTELPPGFKVICETRNAPIAGMADESRQMYGLQFHPEVTHTLQGLRILQRFVVDICKASTDWTPEHIIDEAINKIREQVGTEKVLLGLSGGVDSSVVAALLHRAIGEQLVCVFVDTGLLRLNEAEQVLSMFGRHMGIRIIAVNAEDKFLTALKGVTCPEEKRKIIGRTFIEVFDEEAQKLTDIKWLAQGTIYPDVIESAATSTNDAAVVIKSHHNVGGLPDTLNLKLLEPIRELFKDEVRQVGLELGLPHDMVYRHPFPGPGLGVRILAEVKKEYADILRKADAIFIEELHNAQLYHKISQAFAVFLPVKSVGVMGDGRRYDYVICLRAVETVDFMTAHWSQLPWDFLGKVSNRIINEVEGVSRVTYDISGKPPATIEWE</sequence>
<feature type="chain" id="PRO_0000229437" description="GMP synthase [glutamine-hydrolyzing]">
    <location>
        <begin position="1"/>
        <end position="525"/>
    </location>
</feature>
<feature type="domain" description="Glutamine amidotransferase type-1" evidence="1">
    <location>
        <begin position="8"/>
        <end position="206"/>
    </location>
</feature>
<feature type="domain" description="GMPS ATP-PPase" evidence="1">
    <location>
        <begin position="207"/>
        <end position="400"/>
    </location>
</feature>
<feature type="active site" description="Nucleophile" evidence="1">
    <location>
        <position position="85"/>
    </location>
</feature>
<feature type="active site" evidence="1">
    <location>
        <position position="180"/>
    </location>
</feature>
<feature type="active site" evidence="1">
    <location>
        <position position="182"/>
    </location>
</feature>
<feature type="binding site" evidence="1">
    <location>
        <begin position="234"/>
        <end position="240"/>
    </location>
    <ligand>
        <name>ATP</name>
        <dbReference type="ChEBI" id="CHEBI:30616"/>
    </ligand>
</feature>
<protein>
    <recommendedName>
        <fullName evidence="1">GMP synthase [glutamine-hydrolyzing]</fullName>
        <ecNumber evidence="1">6.3.5.2</ecNumber>
    </recommendedName>
    <alternativeName>
        <fullName evidence="1">GMP synthetase</fullName>
    </alternativeName>
    <alternativeName>
        <fullName evidence="1">Glutamine amidotransferase</fullName>
    </alternativeName>
</protein>
<reference key="1">
    <citation type="journal article" date="2004" name="Nat. Genet.">
        <title>Evidence in the Legionella pneumophila genome for exploitation of host cell functions and high genome plasticity.</title>
        <authorList>
            <person name="Cazalet C."/>
            <person name="Rusniok C."/>
            <person name="Brueggemann H."/>
            <person name="Zidane N."/>
            <person name="Magnier A."/>
            <person name="Ma L."/>
            <person name="Tichit M."/>
            <person name="Jarraud S."/>
            <person name="Bouchier C."/>
            <person name="Vandenesch F."/>
            <person name="Kunst F."/>
            <person name="Etienne J."/>
            <person name="Glaser P."/>
            <person name="Buchrieser C."/>
        </authorList>
    </citation>
    <scope>NUCLEOTIDE SEQUENCE [LARGE SCALE GENOMIC DNA]</scope>
    <source>
        <strain>Lens</strain>
    </source>
</reference>
<evidence type="ECO:0000255" key="1">
    <source>
        <dbReference type="HAMAP-Rule" id="MF_00344"/>
    </source>
</evidence>